<reference key="1">
    <citation type="journal article" date="2015" name="Proc. Natl. Acad. Sci. U.S.A.">
        <title>Trichodesmium genome maintains abundant, widespread noncoding DNA in situ, despite oligotrophic lifestyle.</title>
        <authorList>
            <person name="Walworth N."/>
            <person name="Pfreundt U."/>
            <person name="Nelson W.C."/>
            <person name="Mincer T."/>
            <person name="Heidelberg J.F."/>
            <person name="Fu F."/>
            <person name="Waterbury J.B."/>
            <person name="Glavina del Rio T."/>
            <person name="Goodwin L."/>
            <person name="Kyrpides N.C."/>
            <person name="Land M.L."/>
            <person name="Woyke T."/>
            <person name="Hutchins D.A."/>
            <person name="Hess W.R."/>
            <person name="Webb E.A."/>
        </authorList>
    </citation>
    <scope>NUCLEOTIDE SEQUENCE [LARGE SCALE GENOMIC DNA]</scope>
    <source>
        <strain>IMS101</strain>
    </source>
</reference>
<proteinExistence type="inferred from homology"/>
<evidence type="ECO:0000255" key="1">
    <source>
        <dbReference type="HAMAP-Rule" id="MF_01347"/>
    </source>
</evidence>
<dbReference type="EC" id="7.1.2.2" evidence="1"/>
<dbReference type="EMBL" id="CP000393">
    <property type="protein sequence ID" value="ABG52486.1"/>
    <property type="molecule type" value="Genomic_DNA"/>
</dbReference>
<dbReference type="RefSeq" id="WP_011612831.1">
    <property type="nucleotide sequence ID" value="NC_008312.1"/>
</dbReference>
<dbReference type="SMR" id="Q10Z38"/>
<dbReference type="STRING" id="203124.Tery_3385"/>
<dbReference type="KEGG" id="ter:Tery_3385"/>
<dbReference type="eggNOG" id="COG0055">
    <property type="taxonomic scope" value="Bacteria"/>
</dbReference>
<dbReference type="HOGENOM" id="CLU_022398_0_2_3"/>
<dbReference type="OrthoDB" id="9801639at2"/>
<dbReference type="GO" id="GO:0031676">
    <property type="term" value="C:plasma membrane-derived thylakoid membrane"/>
    <property type="evidence" value="ECO:0007669"/>
    <property type="project" value="UniProtKB-SubCell"/>
</dbReference>
<dbReference type="GO" id="GO:0045259">
    <property type="term" value="C:proton-transporting ATP synthase complex"/>
    <property type="evidence" value="ECO:0007669"/>
    <property type="project" value="UniProtKB-KW"/>
</dbReference>
<dbReference type="GO" id="GO:0005524">
    <property type="term" value="F:ATP binding"/>
    <property type="evidence" value="ECO:0007669"/>
    <property type="project" value="UniProtKB-UniRule"/>
</dbReference>
<dbReference type="GO" id="GO:0016887">
    <property type="term" value="F:ATP hydrolysis activity"/>
    <property type="evidence" value="ECO:0007669"/>
    <property type="project" value="InterPro"/>
</dbReference>
<dbReference type="GO" id="GO:0046933">
    <property type="term" value="F:proton-transporting ATP synthase activity, rotational mechanism"/>
    <property type="evidence" value="ECO:0007669"/>
    <property type="project" value="UniProtKB-UniRule"/>
</dbReference>
<dbReference type="CDD" id="cd18110">
    <property type="entry name" value="ATP-synt_F1_beta_C"/>
    <property type="match status" value="1"/>
</dbReference>
<dbReference type="CDD" id="cd18115">
    <property type="entry name" value="ATP-synt_F1_beta_N"/>
    <property type="match status" value="1"/>
</dbReference>
<dbReference type="CDD" id="cd01133">
    <property type="entry name" value="F1-ATPase_beta_CD"/>
    <property type="match status" value="1"/>
</dbReference>
<dbReference type="FunFam" id="1.10.1140.10:FF:000001">
    <property type="entry name" value="ATP synthase subunit beta"/>
    <property type="match status" value="1"/>
</dbReference>
<dbReference type="FunFam" id="3.40.50.300:FF:000026">
    <property type="entry name" value="ATP synthase subunit beta"/>
    <property type="match status" value="1"/>
</dbReference>
<dbReference type="FunFam" id="2.40.10.170:FF:000002">
    <property type="entry name" value="ATP synthase subunit beta, chloroplastic"/>
    <property type="match status" value="1"/>
</dbReference>
<dbReference type="Gene3D" id="2.40.10.170">
    <property type="match status" value="1"/>
</dbReference>
<dbReference type="Gene3D" id="1.10.1140.10">
    <property type="entry name" value="Bovine Mitochondrial F1-atpase, Atp Synthase Beta Chain, Chain D, domain 3"/>
    <property type="match status" value="1"/>
</dbReference>
<dbReference type="Gene3D" id="3.40.50.300">
    <property type="entry name" value="P-loop containing nucleotide triphosphate hydrolases"/>
    <property type="match status" value="1"/>
</dbReference>
<dbReference type="HAMAP" id="MF_01347">
    <property type="entry name" value="ATP_synth_beta_bact"/>
    <property type="match status" value="1"/>
</dbReference>
<dbReference type="InterPro" id="IPR003593">
    <property type="entry name" value="AAA+_ATPase"/>
</dbReference>
<dbReference type="InterPro" id="IPR055190">
    <property type="entry name" value="ATP-synt_VA_C"/>
</dbReference>
<dbReference type="InterPro" id="IPR005722">
    <property type="entry name" value="ATP_synth_F1_bsu"/>
</dbReference>
<dbReference type="InterPro" id="IPR020003">
    <property type="entry name" value="ATPase_a/bsu_AS"/>
</dbReference>
<dbReference type="InterPro" id="IPR050053">
    <property type="entry name" value="ATPase_alpha/beta_chains"/>
</dbReference>
<dbReference type="InterPro" id="IPR004100">
    <property type="entry name" value="ATPase_F1/V1/A1_a/bsu_N"/>
</dbReference>
<dbReference type="InterPro" id="IPR036121">
    <property type="entry name" value="ATPase_F1/V1/A1_a/bsu_N_sf"/>
</dbReference>
<dbReference type="InterPro" id="IPR000194">
    <property type="entry name" value="ATPase_F1/V1/A1_a/bsu_nucl-bd"/>
</dbReference>
<dbReference type="InterPro" id="IPR024034">
    <property type="entry name" value="ATPase_F1/V1_b/a_C"/>
</dbReference>
<dbReference type="InterPro" id="IPR027417">
    <property type="entry name" value="P-loop_NTPase"/>
</dbReference>
<dbReference type="NCBIfam" id="TIGR01039">
    <property type="entry name" value="atpD"/>
    <property type="match status" value="1"/>
</dbReference>
<dbReference type="PANTHER" id="PTHR15184">
    <property type="entry name" value="ATP SYNTHASE"/>
    <property type="match status" value="1"/>
</dbReference>
<dbReference type="PANTHER" id="PTHR15184:SF71">
    <property type="entry name" value="ATP SYNTHASE SUBUNIT BETA, MITOCHONDRIAL"/>
    <property type="match status" value="1"/>
</dbReference>
<dbReference type="Pfam" id="PF00006">
    <property type="entry name" value="ATP-synt_ab"/>
    <property type="match status" value="1"/>
</dbReference>
<dbReference type="Pfam" id="PF02874">
    <property type="entry name" value="ATP-synt_ab_N"/>
    <property type="match status" value="1"/>
</dbReference>
<dbReference type="Pfam" id="PF22919">
    <property type="entry name" value="ATP-synt_VA_C"/>
    <property type="match status" value="1"/>
</dbReference>
<dbReference type="PIRSF" id="PIRSF039072">
    <property type="entry name" value="ATPase_subunit_beta"/>
    <property type="match status" value="1"/>
</dbReference>
<dbReference type="SMART" id="SM00382">
    <property type="entry name" value="AAA"/>
    <property type="match status" value="1"/>
</dbReference>
<dbReference type="SUPFAM" id="SSF47917">
    <property type="entry name" value="C-terminal domain of alpha and beta subunits of F1 ATP synthase"/>
    <property type="match status" value="1"/>
</dbReference>
<dbReference type="SUPFAM" id="SSF50615">
    <property type="entry name" value="N-terminal domain of alpha and beta subunits of F1 ATP synthase"/>
    <property type="match status" value="1"/>
</dbReference>
<dbReference type="SUPFAM" id="SSF52540">
    <property type="entry name" value="P-loop containing nucleoside triphosphate hydrolases"/>
    <property type="match status" value="1"/>
</dbReference>
<dbReference type="PROSITE" id="PS00152">
    <property type="entry name" value="ATPASE_ALPHA_BETA"/>
    <property type="match status" value="1"/>
</dbReference>
<feature type="chain" id="PRO_1000055178" description="ATP synthase subunit beta">
    <location>
        <begin position="1"/>
        <end position="484"/>
    </location>
</feature>
<feature type="binding site" evidence="1">
    <location>
        <begin position="162"/>
        <end position="169"/>
    </location>
    <ligand>
        <name>ATP</name>
        <dbReference type="ChEBI" id="CHEBI:30616"/>
    </ligand>
</feature>
<comment type="function">
    <text evidence="1">Produces ATP from ADP in the presence of a proton gradient across the membrane. The catalytic sites are hosted primarily by the beta subunits.</text>
</comment>
<comment type="catalytic activity">
    <reaction evidence="1">
        <text>ATP + H2O + 4 H(+)(in) = ADP + phosphate + 5 H(+)(out)</text>
        <dbReference type="Rhea" id="RHEA:57720"/>
        <dbReference type="ChEBI" id="CHEBI:15377"/>
        <dbReference type="ChEBI" id="CHEBI:15378"/>
        <dbReference type="ChEBI" id="CHEBI:30616"/>
        <dbReference type="ChEBI" id="CHEBI:43474"/>
        <dbReference type="ChEBI" id="CHEBI:456216"/>
        <dbReference type="EC" id="7.1.2.2"/>
    </reaction>
</comment>
<comment type="subunit">
    <text evidence="1">F-type ATPases have 2 components, CF(1) - the catalytic core - and CF(0) - the membrane proton channel. CF(1) has five subunits: alpha(3), beta(3), gamma(1), delta(1), epsilon(1). CF(0) has four main subunits: a(1), b(1), b'(1) and c(9-12).</text>
</comment>
<comment type="subcellular location">
    <subcellularLocation>
        <location evidence="1">Cellular thylakoid membrane</location>
        <topology evidence="1">Peripheral membrane protein</topology>
    </subcellularLocation>
</comment>
<comment type="similarity">
    <text evidence="1">Belongs to the ATPase alpha/beta chains family.</text>
</comment>
<keyword id="KW-0066">ATP synthesis</keyword>
<keyword id="KW-0067">ATP-binding</keyword>
<keyword id="KW-0139">CF(1)</keyword>
<keyword id="KW-0375">Hydrogen ion transport</keyword>
<keyword id="KW-0406">Ion transport</keyword>
<keyword id="KW-0472">Membrane</keyword>
<keyword id="KW-0547">Nucleotide-binding</keyword>
<keyword id="KW-0793">Thylakoid</keyword>
<keyword id="KW-1278">Translocase</keyword>
<keyword id="KW-0813">Transport</keyword>
<protein>
    <recommendedName>
        <fullName evidence="1">ATP synthase subunit beta</fullName>
        <ecNumber evidence="1">7.1.2.2</ecNumber>
    </recommendedName>
    <alternativeName>
        <fullName evidence="1">ATP synthase F1 sector subunit beta</fullName>
    </alternativeName>
    <alternativeName>
        <fullName evidence="1">F-ATPase subunit beta</fullName>
    </alternativeName>
</protein>
<accession>Q10Z38</accession>
<sequence>MVSTLEKTNVGSITQIIGPVVDVKFPSGNLPEIYNALTITAKNEAGQDVSVTCEVQQLLGDNQVRAVAMSATDGLVRGMEVVDTRAAISVPVGNATLGRIFNVVGEPVDELGPVGTEDKSPIHREAPKLVDLETQPSVFETGIKVVDLLAPYRRGGKIGLFGGAGVGKTVIIMELINNIAKAHGGVSVFGGVGERTREGNDLYNEMIESKVINPENLSESKVALVYGQMNEPPGARMRVGLSALTMAEYFRDVSKQDVLLFIDNIFRFVQAGSEVSALLGRMPSAVGYQPTLGTEMGELQERITSTKEGSITSIQAVYVPADDLTDPAPATTFAHLDATTVLSRGLASKGIYPAVDPLDSTSTMLQPSVVGKEHYDVARAVQSTLQRYKELQDIIAILGLDELSEDDRLVVARARKIERFLSQPFFVAEVFTGSPGQYVKLEDTMKGFKMILSGELDDLPEQAFYMVGGIDQVIAKAEKLKAEA</sequence>
<name>ATPB_TRIEI</name>
<organism>
    <name type="scientific">Trichodesmium erythraeum (strain IMS101)</name>
    <dbReference type="NCBI Taxonomy" id="203124"/>
    <lineage>
        <taxon>Bacteria</taxon>
        <taxon>Bacillati</taxon>
        <taxon>Cyanobacteriota</taxon>
        <taxon>Cyanophyceae</taxon>
        <taxon>Oscillatoriophycideae</taxon>
        <taxon>Oscillatoriales</taxon>
        <taxon>Microcoleaceae</taxon>
        <taxon>Trichodesmium</taxon>
    </lineage>
</organism>
<gene>
    <name evidence="1" type="primary">atpD</name>
    <name evidence="1" type="synonym">atpB</name>
    <name type="ordered locus">Tery_3385</name>
</gene>